<dbReference type="EC" id="6.1.1.2" evidence="1"/>
<dbReference type="EMBL" id="CR860234">
    <property type="protein sequence ID" value="CAH92376.1"/>
    <property type="molecule type" value="mRNA"/>
</dbReference>
<dbReference type="EMBL" id="CR861257">
    <property type="protein sequence ID" value="CAH93325.1"/>
    <property type="molecule type" value="mRNA"/>
</dbReference>
<dbReference type="RefSeq" id="XP_024086923.1">
    <property type="nucleotide sequence ID" value="XM_024231155.3"/>
</dbReference>
<dbReference type="RefSeq" id="XP_063571206.1">
    <property type="nucleotide sequence ID" value="XM_063715136.1"/>
</dbReference>
<dbReference type="SMR" id="Q5R4J1"/>
<dbReference type="FunCoup" id="Q5R4J1">
    <property type="interactions" value="3113"/>
</dbReference>
<dbReference type="STRING" id="9601.ENSPPYP00000006982"/>
<dbReference type="Ensembl" id="ENSPPYT00000007257.3">
    <property type="protein sequence ID" value="ENSPPYP00000006982.3"/>
    <property type="gene ID" value="ENSPPYG00000006142.3"/>
</dbReference>
<dbReference type="GeneID" id="100171952"/>
<dbReference type="eggNOG" id="KOG2145">
    <property type="taxonomic scope" value="Eukaryota"/>
</dbReference>
<dbReference type="GeneTree" id="ENSGT00940000153724"/>
<dbReference type="InParanoid" id="Q5R4J1"/>
<dbReference type="OMA" id="SIYHRFM"/>
<dbReference type="OrthoDB" id="10261385at2759"/>
<dbReference type="Proteomes" id="UP000001595">
    <property type="component" value="Chromosome 14"/>
</dbReference>
<dbReference type="GO" id="GO:0005829">
    <property type="term" value="C:cytosol"/>
    <property type="evidence" value="ECO:0007669"/>
    <property type="project" value="Ensembl"/>
</dbReference>
<dbReference type="GO" id="GO:0005634">
    <property type="term" value="C:nucleus"/>
    <property type="evidence" value="ECO:0007669"/>
    <property type="project" value="Ensembl"/>
</dbReference>
<dbReference type="GO" id="GO:0032991">
    <property type="term" value="C:protein-containing complex"/>
    <property type="evidence" value="ECO:0007669"/>
    <property type="project" value="Ensembl"/>
</dbReference>
<dbReference type="GO" id="GO:0005524">
    <property type="term" value="F:ATP binding"/>
    <property type="evidence" value="ECO:0007669"/>
    <property type="project" value="UniProtKB-KW"/>
</dbReference>
<dbReference type="GO" id="GO:0019210">
    <property type="term" value="F:kinase inhibitor activity"/>
    <property type="evidence" value="ECO:0007669"/>
    <property type="project" value="Ensembl"/>
</dbReference>
<dbReference type="GO" id="GO:0019904">
    <property type="term" value="F:protein domain specific binding"/>
    <property type="evidence" value="ECO:0007669"/>
    <property type="project" value="Ensembl"/>
</dbReference>
<dbReference type="GO" id="GO:0042803">
    <property type="term" value="F:protein homodimerization activity"/>
    <property type="evidence" value="ECO:0007669"/>
    <property type="project" value="Ensembl"/>
</dbReference>
<dbReference type="GO" id="GO:0019901">
    <property type="term" value="F:protein kinase binding"/>
    <property type="evidence" value="ECO:0007669"/>
    <property type="project" value="Ensembl"/>
</dbReference>
<dbReference type="GO" id="GO:0004830">
    <property type="term" value="F:tryptophan-tRNA ligase activity"/>
    <property type="evidence" value="ECO:0007669"/>
    <property type="project" value="UniProtKB-EC"/>
</dbReference>
<dbReference type="GO" id="GO:0001525">
    <property type="term" value="P:angiogenesis"/>
    <property type="evidence" value="ECO:0007669"/>
    <property type="project" value="UniProtKB-KW"/>
</dbReference>
<dbReference type="GO" id="GO:0010628">
    <property type="term" value="P:positive regulation of gene expression"/>
    <property type="evidence" value="ECO:0007669"/>
    <property type="project" value="Ensembl"/>
</dbReference>
<dbReference type="GO" id="GO:0031334">
    <property type="term" value="P:positive regulation of protein-containing complex assembly"/>
    <property type="evidence" value="ECO:0007669"/>
    <property type="project" value="Ensembl"/>
</dbReference>
<dbReference type="GO" id="GO:0045765">
    <property type="term" value="P:regulation of angiogenesis"/>
    <property type="evidence" value="ECO:0007669"/>
    <property type="project" value="Ensembl"/>
</dbReference>
<dbReference type="GO" id="GO:0006436">
    <property type="term" value="P:tryptophanyl-tRNA aminoacylation"/>
    <property type="evidence" value="ECO:0007669"/>
    <property type="project" value="Ensembl"/>
</dbReference>
<dbReference type="CDD" id="cd00806">
    <property type="entry name" value="TrpRS_core"/>
    <property type="match status" value="1"/>
</dbReference>
<dbReference type="CDD" id="cd00936">
    <property type="entry name" value="WEPRS_RNA"/>
    <property type="match status" value="1"/>
</dbReference>
<dbReference type="FunFam" id="1.10.287.10:FF:000006">
    <property type="entry name" value="Bifunctional glutamate/proline--tRNA ligase"/>
    <property type="match status" value="1"/>
</dbReference>
<dbReference type="FunFam" id="1.10.240.10:FF:000003">
    <property type="entry name" value="Tryptophan--tRNA ligase, cytoplasmic"/>
    <property type="match status" value="1"/>
</dbReference>
<dbReference type="FunFam" id="3.40.50.620:FF:000454">
    <property type="entry name" value="Tryptophan--tRNA ligase, cytoplasmic"/>
    <property type="match status" value="1"/>
</dbReference>
<dbReference type="Gene3D" id="3.40.50.620">
    <property type="entry name" value="HUPs"/>
    <property type="match status" value="1"/>
</dbReference>
<dbReference type="Gene3D" id="1.10.287.10">
    <property type="entry name" value="S15/NS1, RNA-binding"/>
    <property type="match status" value="1"/>
</dbReference>
<dbReference type="Gene3D" id="1.10.240.10">
    <property type="entry name" value="Tyrosyl-Transfer RNA Synthetase"/>
    <property type="match status" value="1"/>
</dbReference>
<dbReference type="InterPro" id="IPR001412">
    <property type="entry name" value="aa-tRNA-synth_I_CS"/>
</dbReference>
<dbReference type="InterPro" id="IPR002305">
    <property type="entry name" value="aa-tRNA-synth_Ic"/>
</dbReference>
<dbReference type="InterPro" id="IPR014729">
    <property type="entry name" value="Rossmann-like_a/b/a_fold"/>
</dbReference>
<dbReference type="InterPro" id="IPR002306">
    <property type="entry name" value="Trp-tRNA-ligase"/>
</dbReference>
<dbReference type="InterPro" id="IPR009068">
    <property type="entry name" value="uS15_NS1_RNA-bd_sf"/>
</dbReference>
<dbReference type="InterPro" id="IPR000738">
    <property type="entry name" value="WHEP-TRS_dom"/>
</dbReference>
<dbReference type="NCBIfam" id="TIGR00233">
    <property type="entry name" value="trpS"/>
    <property type="match status" value="1"/>
</dbReference>
<dbReference type="PANTHER" id="PTHR10055:SF1">
    <property type="entry name" value="TRYPTOPHAN--TRNA LIGASE, CYTOPLASMIC"/>
    <property type="match status" value="1"/>
</dbReference>
<dbReference type="PANTHER" id="PTHR10055">
    <property type="entry name" value="TRYPTOPHANYL-TRNA SYNTHETASE"/>
    <property type="match status" value="1"/>
</dbReference>
<dbReference type="Pfam" id="PF00579">
    <property type="entry name" value="tRNA-synt_1b"/>
    <property type="match status" value="1"/>
</dbReference>
<dbReference type="Pfam" id="PF00458">
    <property type="entry name" value="WHEP-TRS"/>
    <property type="match status" value="1"/>
</dbReference>
<dbReference type="PRINTS" id="PR01039">
    <property type="entry name" value="TRNASYNTHTRP"/>
</dbReference>
<dbReference type="SMART" id="SM00991">
    <property type="entry name" value="WHEP-TRS"/>
    <property type="match status" value="1"/>
</dbReference>
<dbReference type="SUPFAM" id="SSF52374">
    <property type="entry name" value="Nucleotidylyl transferase"/>
    <property type="match status" value="1"/>
</dbReference>
<dbReference type="SUPFAM" id="SSF47060">
    <property type="entry name" value="S15/NS1 RNA-binding domain"/>
    <property type="match status" value="1"/>
</dbReference>
<dbReference type="PROSITE" id="PS00178">
    <property type="entry name" value="AA_TRNA_LIGASE_I"/>
    <property type="match status" value="1"/>
</dbReference>
<dbReference type="PROSITE" id="PS00762">
    <property type="entry name" value="WHEP_TRS_1"/>
    <property type="match status" value="1"/>
</dbReference>
<dbReference type="PROSITE" id="PS51185">
    <property type="entry name" value="WHEP_TRS_2"/>
    <property type="match status" value="1"/>
</dbReference>
<name>SYWC_PONAB</name>
<comment type="function">
    <text evidence="1">Catalyzes the attachment of tryptophan to tRNA(Trp) in a two-step reaction: tryptophan is first activated by ATP to form Trp-AMP and then transferred to the acceptor end of the tRNA(Trp). Could also possess an angiostatic activity.</text>
</comment>
<comment type="catalytic activity">
    <reaction evidence="1">
        <text>tRNA(Trp) + L-tryptophan + ATP = L-tryptophyl-tRNA(Trp) + AMP + diphosphate + H(+)</text>
        <dbReference type="Rhea" id="RHEA:24080"/>
        <dbReference type="Rhea" id="RHEA-COMP:9671"/>
        <dbReference type="Rhea" id="RHEA-COMP:9705"/>
        <dbReference type="ChEBI" id="CHEBI:15378"/>
        <dbReference type="ChEBI" id="CHEBI:30616"/>
        <dbReference type="ChEBI" id="CHEBI:33019"/>
        <dbReference type="ChEBI" id="CHEBI:57912"/>
        <dbReference type="ChEBI" id="CHEBI:78442"/>
        <dbReference type="ChEBI" id="CHEBI:78535"/>
        <dbReference type="ChEBI" id="CHEBI:456215"/>
        <dbReference type="EC" id="6.1.1.2"/>
    </reaction>
    <physiologicalReaction direction="left-to-right" evidence="1">
        <dbReference type="Rhea" id="RHEA:24081"/>
    </physiologicalReaction>
</comment>
<comment type="subunit">
    <text evidence="1">Homodimer. Interacts with oxidized form of GAPDH (By similarity).</text>
</comment>
<comment type="subcellular location">
    <subcellularLocation>
        <location evidence="1">Cytoplasm</location>
    </subcellularLocation>
</comment>
<comment type="PTM">
    <text evidence="1">Proteolytic cleavage generates 2 forms; T1-TrpRS and T2-TrpRS.</text>
</comment>
<comment type="similarity">
    <text evidence="4">Belongs to the class-I aminoacyl-tRNA synthetase family.</text>
</comment>
<feature type="chain" id="PRO_0000136740" description="Tryptophan--tRNA ligase, cytoplasmic">
    <location>
        <begin position="1"/>
        <end position="472"/>
    </location>
</feature>
<feature type="chain" id="PRO_0000386465" description="T1-TrpRS" evidence="1">
    <location>
        <begin position="72"/>
        <end position="472"/>
    </location>
</feature>
<feature type="chain" id="PRO_0000386466" description="T2-TrpRS" evidence="1">
    <location>
        <begin position="95"/>
        <end position="472"/>
    </location>
</feature>
<feature type="domain" description="WHEP-TRS" evidence="3">
    <location>
        <begin position="9"/>
        <end position="65"/>
    </location>
</feature>
<feature type="short sequence motif" description="'HIGH' region">
    <location>
        <begin position="165"/>
        <end position="174"/>
    </location>
</feature>
<feature type="short sequence motif" description="'KMSKS' region">
    <location>
        <begin position="350"/>
        <end position="354"/>
    </location>
</feature>
<feature type="modified residue" description="N6-succinyllysine" evidence="2">
    <location>
        <position position="155"/>
    </location>
</feature>
<feature type="modified residue" description="Phosphoserine" evidence="1">
    <location>
        <position position="352"/>
    </location>
</feature>
<feature type="sequence conflict" description="In Ref. 1; CAH93325." evidence="4" ref="1">
    <original>E</original>
    <variation>V</variation>
    <location>
        <position position="5"/>
    </location>
</feature>
<feature type="sequence conflict" description="In Ref. 1; CAH93325." evidence="4" ref="1">
    <original>E</original>
    <variation>G</variation>
    <location>
        <position position="36"/>
    </location>
</feature>
<feature type="sequence conflict" description="In Ref. 1; CAH93325." evidence="4" ref="1">
    <original>K</original>
    <variation>E</variation>
    <location>
        <position position="52"/>
    </location>
</feature>
<feature type="sequence conflict" description="In Ref. 1; CAH92376." evidence="4" ref="1">
    <original>G</original>
    <variation>S</variation>
    <location>
        <position position="164"/>
    </location>
</feature>
<feature type="sequence conflict" description="In Ref. 1; CAH92376." evidence="4" ref="1">
    <original>N</original>
    <variation>S</variation>
    <location>
        <position position="262"/>
    </location>
</feature>
<feature type="sequence conflict" description="In Ref. 1; CAH93325." evidence="4" ref="1">
    <original>P</original>
    <variation>L</variation>
    <location>
        <position position="333"/>
    </location>
</feature>
<protein>
    <recommendedName>
        <fullName evidence="1">Tryptophan--tRNA ligase, cytoplasmic</fullName>
        <ecNumber evidence="1">6.1.1.2</ecNumber>
    </recommendedName>
    <alternativeName>
        <fullName>Tryptophanyl-tRNA synthetase</fullName>
        <shortName>TrpRS</shortName>
    </alternativeName>
    <component>
        <recommendedName>
            <fullName>T1-TrpRS</fullName>
        </recommendedName>
    </component>
    <component>
        <recommendedName>
            <fullName>T2-TrpRS</fullName>
        </recommendedName>
    </component>
</protein>
<organism>
    <name type="scientific">Pongo abelii</name>
    <name type="common">Sumatran orangutan</name>
    <name type="synonym">Pongo pygmaeus abelii</name>
    <dbReference type="NCBI Taxonomy" id="9601"/>
    <lineage>
        <taxon>Eukaryota</taxon>
        <taxon>Metazoa</taxon>
        <taxon>Chordata</taxon>
        <taxon>Craniata</taxon>
        <taxon>Vertebrata</taxon>
        <taxon>Euteleostomi</taxon>
        <taxon>Mammalia</taxon>
        <taxon>Eutheria</taxon>
        <taxon>Euarchontoglires</taxon>
        <taxon>Primates</taxon>
        <taxon>Haplorrhini</taxon>
        <taxon>Catarrhini</taxon>
        <taxon>Hominidae</taxon>
        <taxon>Pongo</taxon>
    </lineage>
</organism>
<keyword id="KW-0030">Aminoacyl-tRNA synthetase</keyword>
<keyword id="KW-0037">Angiogenesis</keyword>
<keyword id="KW-0067">ATP-binding</keyword>
<keyword id="KW-0963">Cytoplasm</keyword>
<keyword id="KW-0436">Ligase</keyword>
<keyword id="KW-0547">Nucleotide-binding</keyword>
<keyword id="KW-0597">Phosphoprotein</keyword>
<keyword id="KW-0648">Protein biosynthesis</keyword>
<keyword id="KW-1185">Reference proteome</keyword>
<evidence type="ECO:0000250" key="1">
    <source>
        <dbReference type="UniProtKB" id="P23381"/>
    </source>
</evidence>
<evidence type="ECO:0000250" key="2">
    <source>
        <dbReference type="UniProtKB" id="P32921"/>
    </source>
</evidence>
<evidence type="ECO:0000255" key="3">
    <source>
        <dbReference type="PROSITE-ProRule" id="PRU00531"/>
    </source>
</evidence>
<evidence type="ECO:0000305" key="4"/>
<gene>
    <name type="primary">WARS1</name>
    <name type="synonym">WARS</name>
</gene>
<reference key="1">
    <citation type="submission" date="2004-11" db="EMBL/GenBank/DDBJ databases">
        <authorList>
            <consortium name="The German cDNA consortium"/>
        </authorList>
    </citation>
    <scope>NUCLEOTIDE SEQUENCE [LARGE SCALE MRNA]</scope>
    <source>
        <tissue>Brain cortex</tissue>
        <tissue>Kidney</tissue>
    </source>
</reference>
<proteinExistence type="evidence at transcript level"/>
<accession>Q5R4J1</accession>
<accession>Q5R784</accession>
<sequence length="472" mass="53373">MPNSEPCVSPLELFNSIATQGELVRSLKAGNASKDEIDSAVKMLLSLKMSYKAAMGEDYKANCPPGNPAPTSNHGPDATEAEEDFVDPWTVQTSSAKGIDYDKLIVRFGSSKIDKELINRIERATGQRPHRFLRRGIFFSHRDMNQVLDAYENKKPFYLYTGRGPSSEAMHVGHLIPFIFTKWLQDVFNVPLVIQMTDDEKYLWKDLTLDQAYSYAVENAKDIIACGFDINKTFIFSDLDYMGMSSGFYKNVVKIQKHVTFNQVKGIFGFTDSDCIGKISFPAIQAAPSFSNSFPQIFRDRTDIQCLIPCAIDQDPYFRMTRDVAPRIGYPKPALLHSTFFPALQGAQTKMSASDPNSSIFLTDTAKQIKTKVNKHAFSGGRDTIEEHRQFGGNCDVDVSFMYLTFFLEDDDKLEQIRKDYTSGAMLTGELKKALIEVLQPLIAEHQARRKEVTDEIVKEFMTPRKLSFDFQ</sequence>